<comment type="function">
    <text evidence="1">Plays a role in processing non linear or branched viral DNA intermediates in order to promote the production of mature packaged unit-length linear progeny viral DNA molecules. Exhibits endonuclease and exonuclease activities and accepts both double-stranded and single-stranded DNA as substrate. Exonuclease digestion of DNA is in the 5'-&gt; 3' direction and the products are 5'-monophosphate nucleosides. Additionally, forms a recombinase with the major DNA-binding protein, which displays strand exchange activity.</text>
</comment>
<comment type="subunit">
    <text evidence="1">Interacts with major DNA-binding protein; this interaction increases the nuclease processivity of the alkaline exonuclease.</text>
</comment>
<comment type="subcellular location">
    <subcellularLocation>
        <location evidence="1">Host nucleus</location>
    </subcellularLocation>
    <subcellularLocation>
        <location evidence="1">Host cytoplasm</location>
    </subcellularLocation>
</comment>
<comment type="similarity">
    <text evidence="1">Belongs to the herpesviridae alkaline nuclease family.</text>
</comment>
<feature type="chain" id="PRO_0000115695" description="Alkaline nuclease">
    <location>
        <begin position="1"/>
        <end position="488"/>
    </location>
</feature>
<feature type="site" description="Required for function" evidence="1">
    <location>
        <position position="177"/>
    </location>
</feature>
<feature type="site" description="Required for function" evidence="1">
    <location>
        <position position="213"/>
    </location>
</feature>
<feature type="site" description="Required for function" evidence="1">
    <location>
        <position position="236"/>
    </location>
</feature>
<feature type="site" description="Required for function" evidence="1">
    <location>
        <position position="238"/>
    </location>
</feature>
<name>AN_HHV6Z</name>
<organismHost>
    <name type="scientific">Homo sapiens</name>
    <name type="common">Human</name>
    <dbReference type="NCBI Taxonomy" id="9606"/>
</organismHost>
<reference key="1">
    <citation type="journal article" date="1996" name="Arch. Virol.">
        <title>Restriction endonuclease mapping and molecular cloning of the human herpesvirus 6 variant B strain Z29 genome.</title>
        <authorList>
            <person name="Lindquester G.J."/>
            <person name="Inoue N."/>
            <person name="Allen R.D."/>
            <person name="Castelli J.W."/>
            <person name="Stamey F.R."/>
            <person name="Dambaugh T.R."/>
            <person name="O'Brian J.J."/>
            <person name="Danovich R.M."/>
            <person name="Frenkel N."/>
            <person name="Pellett P.E."/>
        </authorList>
    </citation>
    <scope>NUCLEOTIDE SEQUENCE [GENOMIC DNA]</scope>
</reference>
<reference key="2">
    <citation type="journal article" date="1999" name="J. Virol.">
        <title>Human herpesvirus 6B genome sequence: coding content and comparison with human herpesvirus 6A.</title>
        <authorList>
            <person name="Dominguez G."/>
            <person name="Dambaugh T.R."/>
            <person name="Stamey F.R."/>
            <person name="Dewhurst S."/>
            <person name="Inoue N."/>
            <person name="Pellett P.E."/>
        </authorList>
    </citation>
    <scope>NUCLEOTIDE SEQUENCE [LARGE SCALE GENOMIC DNA]</scope>
</reference>
<keyword id="KW-0255">Endonuclease</keyword>
<keyword id="KW-0269">Exonuclease</keyword>
<keyword id="KW-1035">Host cytoplasm</keyword>
<keyword id="KW-1048">Host nucleus</keyword>
<keyword id="KW-0945">Host-virus interaction</keyword>
<keyword id="KW-0378">Hydrolase</keyword>
<keyword id="KW-0540">Nuclease</keyword>
<keyword id="KW-1185">Reference proteome</keyword>
<protein>
    <recommendedName>
        <fullName evidence="1">Alkaline nuclease</fullName>
        <ecNumber evidence="1">3.1.-.-</ecNumber>
    </recommendedName>
</protein>
<organism>
    <name type="scientific">Human herpesvirus 6B (strain Z29)</name>
    <name type="common">HHV-6 variant B</name>
    <name type="synonym">Human B lymphotropic virus</name>
    <dbReference type="NCBI Taxonomy" id="36351"/>
    <lineage>
        <taxon>Viruses</taxon>
        <taxon>Duplodnaviria</taxon>
        <taxon>Heunggongvirae</taxon>
        <taxon>Peploviricota</taxon>
        <taxon>Herviviricetes</taxon>
        <taxon>Herpesvirales</taxon>
        <taxon>Orthoherpesviridae</taxon>
        <taxon>Betaherpesvirinae</taxon>
        <taxon>Roseolovirus</taxon>
        <taxon>Roseolovirus humanbeta6b</taxon>
        <taxon>Human herpesvirus 6B</taxon>
    </lineage>
</organism>
<accession>P52448</accession>
<evidence type="ECO:0000255" key="1">
    <source>
        <dbReference type="HAMAP-Rule" id="MF_04009"/>
    </source>
</evidence>
<gene>
    <name type="primary">U70</name>
    <name type="synonym">CH3R</name>
</gene>
<sequence length="488" mass="56688">MDLNQISETLSAVAEEEPLTMFLLDKLYAIREKIKQVPFSIVRLCHVYCMLIKYNASNNNCILGRKLIEEMQQFLCGARVDGSEDVSMDMSELCKLYDYCPLLCSALCRAPCVFVNKLFKIVERETRGQSENPLWHALRRYTVTATKLYDIYTTRNFLEHKGQQFFGEAVIYGAKHERVIRHLVAIFYVKREVKETLGLLLDPSSGVFGASLDACFGISFNEDGFLMVKEKALIFEIKFRYKYLRDKEDHFVSELLKNPTEKSFSDFILSHPVPAIEFRERGKIPSSREYLMTYDFQYRPQRKLRTCPTPAILTPHIKQLLCLNETQTSTVIVFDCKSHLSEQKLSVFQKAVFTVNVFVNPKHRYFFQSLLQQYVMTQFYINDHSNPEYIESTEVPSVHIVTALFRRRTEEERSLHLVIDETEYIEEEIPLALIVTPVAPNPEFTCRVITDICNLWENNICKQTSLQVWAQSAVNQYLAACVRKPKTP</sequence>
<dbReference type="EC" id="3.1.-.-" evidence="1"/>
<dbReference type="EMBL" id="AF157706">
    <property type="protein sequence ID" value="AAB06353.1"/>
    <property type="molecule type" value="Genomic_DNA"/>
</dbReference>
<dbReference type="PIR" id="T44215">
    <property type="entry name" value="T44215"/>
</dbReference>
<dbReference type="RefSeq" id="NP_050249.1">
    <property type="nucleotide sequence ID" value="NC_000898.1"/>
</dbReference>
<dbReference type="SMR" id="P52448"/>
<dbReference type="DNASU" id="1497070"/>
<dbReference type="GeneID" id="1497070"/>
<dbReference type="KEGG" id="vg:1497070"/>
<dbReference type="Proteomes" id="UP000006930">
    <property type="component" value="Segment"/>
</dbReference>
<dbReference type="GO" id="GO:0030430">
    <property type="term" value="C:host cell cytoplasm"/>
    <property type="evidence" value="ECO:0007669"/>
    <property type="project" value="UniProtKB-SubCell"/>
</dbReference>
<dbReference type="GO" id="GO:0042025">
    <property type="term" value="C:host cell nucleus"/>
    <property type="evidence" value="ECO:0007669"/>
    <property type="project" value="UniProtKB-SubCell"/>
</dbReference>
<dbReference type="GO" id="GO:0003677">
    <property type="term" value="F:DNA binding"/>
    <property type="evidence" value="ECO:0007669"/>
    <property type="project" value="InterPro"/>
</dbReference>
<dbReference type="GO" id="GO:0004519">
    <property type="term" value="F:endonuclease activity"/>
    <property type="evidence" value="ECO:0007669"/>
    <property type="project" value="UniProtKB-KW"/>
</dbReference>
<dbReference type="GO" id="GO:0004527">
    <property type="term" value="F:exonuclease activity"/>
    <property type="evidence" value="ECO:0007669"/>
    <property type="project" value="UniProtKB-KW"/>
</dbReference>
<dbReference type="Gene3D" id="3.90.320.10">
    <property type="match status" value="1"/>
</dbReference>
<dbReference type="HAMAP" id="MF_04009">
    <property type="entry name" value="HSV_AN"/>
    <property type="match status" value="1"/>
</dbReference>
<dbReference type="InterPro" id="IPR001616">
    <property type="entry name" value="Herpes_alk_exo"/>
</dbReference>
<dbReference type="InterPro" id="IPR011604">
    <property type="entry name" value="PDDEXK-like_dom_sf"/>
</dbReference>
<dbReference type="InterPro" id="IPR011335">
    <property type="entry name" value="Restrct_endonuc-II-like"/>
</dbReference>
<dbReference type="InterPro" id="IPR034720">
    <property type="entry name" value="Viral_alk_exo"/>
</dbReference>
<dbReference type="Pfam" id="PF01771">
    <property type="entry name" value="Viral_alk_exo"/>
    <property type="match status" value="1"/>
</dbReference>
<dbReference type="PRINTS" id="PR00924">
    <property type="entry name" value="ALKEXNUCLASE"/>
</dbReference>
<dbReference type="SUPFAM" id="SSF52980">
    <property type="entry name" value="Restriction endonuclease-like"/>
    <property type="match status" value="1"/>
</dbReference>
<proteinExistence type="inferred from homology"/>